<gene>
    <name evidence="1" type="primary">leuA</name>
    <name type="ordered locus">Bcen_1648</name>
</gene>
<proteinExistence type="inferred from homology"/>
<comment type="function">
    <text evidence="1">Catalyzes the condensation of the acetyl group of acetyl-CoA with 3-methyl-2-oxobutanoate (2-ketoisovalerate) to form 3-carboxy-3-hydroxy-4-methylpentanoate (2-isopropylmalate).</text>
</comment>
<comment type="catalytic activity">
    <reaction evidence="1">
        <text>3-methyl-2-oxobutanoate + acetyl-CoA + H2O = (2S)-2-isopropylmalate + CoA + H(+)</text>
        <dbReference type="Rhea" id="RHEA:21524"/>
        <dbReference type="ChEBI" id="CHEBI:1178"/>
        <dbReference type="ChEBI" id="CHEBI:11851"/>
        <dbReference type="ChEBI" id="CHEBI:15377"/>
        <dbReference type="ChEBI" id="CHEBI:15378"/>
        <dbReference type="ChEBI" id="CHEBI:57287"/>
        <dbReference type="ChEBI" id="CHEBI:57288"/>
        <dbReference type="EC" id="2.3.3.13"/>
    </reaction>
</comment>
<comment type="cofactor">
    <cofactor evidence="1">
        <name>Mn(2+)</name>
        <dbReference type="ChEBI" id="CHEBI:29035"/>
    </cofactor>
</comment>
<comment type="pathway">
    <text evidence="1">Amino-acid biosynthesis; L-leucine biosynthesis; L-leucine from 3-methyl-2-oxobutanoate: step 1/4.</text>
</comment>
<comment type="subunit">
    <text evidence="1">Homodimer.</text>
</comment>
<comment type="subcellular location">
    <subcellularLocation>
        <location evidence="1">Cytoplasm</location>
    </subcellularLocation>
</comment>
<comment type="similarity">
    <text evidence="1">Belongs to the alpha-IPM synthase/homocitrate synthase family. LeuA type 1 subfamily.</text>
</comment>
<reference key="1">
    <citation type="submission" date="2006-05" db="EMBL/GenBank/DDBJ databases">
        <title>Complete sequence of chromosome 1 of Burkholderia cenocepacia AU 1054.</title>
        <authorList>
            <consortium name="US DOE Joint Genome Institute"/>
            <person name="Copeland A."/>
            <person name="Lucas S."/>
            <person name="Lapidus A."/>
            <person name="Barry K."/>
            <person name="Detter J.C."/>
            <person name="Glavina del Rio T."/>
            <person name="Hammon N."/>
            <person name="Israni S."/>
            <person name="Dalin E."/>
            <person name="Tice H."/>
            <person name="Pitluck S."/>
            <person name="Chain P."/>
            <person name="Malfatti S."/>
            <person name="Shin M."/>
            <person name="Vergez L."/>
            <person name="Schmutz J."/>
            <person name="Larimer F."/>
            <person name="Land M."/>
            <person name="Hauser L."/>
            <person name="Kyrpides N."/>
            <person name="Lykidis A."/>
            <person name="LiPuma J.J."/>
            <person name="Konstantinidis K."/>
            <person name="Tiedje J.M."/>
            <person name="Richardson P."/>
        </authorList>
    </citation>
    <scope>NUCLEOTIDE SEQUENCE [LARGE SCALE GENOMIC DNA]</scope>
    <source>
        <strain>AU 1054</strain>
    </source>
</reference>
<dbReference type="EC" id="2.3.3.13" evidence="1"/>
<dbReference type="EMBL" id="CP000378">
    <property type="protein sequence ID" value="ABF76552.1"/>
    <property type="molecule type" value="Genomic_DNA"/>
</dbReference>
<dbReference type="SMR" id="Q1BV03"/>
<dbReference type="HOGENOM" id="CLU_022158_0_1_4"/>
<dbReference type="UniPathway" id="UPA00048">
    <property type="reaction ID" value="UER00070"/>
</dbReference>
<dbReference type="GO" id="GO:0005829">
    <property type="term" value="C:cytosol"/>
    <property type="evidence" value="ECO:0007669"/>
    <property type="project" value="TreeGrafter"/>
</dbReference>
<dbReference type="GO" id="GO:0003852">
    <property type="term" value="F:2-isopropylmalate synthase activity"/>
    <property type="evidence" value="ECO:0007669"/>
    <property type="project" value="UniProtKB-UniRule"/>
</dbReference>
<dbReference type="GO" id="GO:0003985">
    <property type="term" value="F:acetyl-CoA C-acetyltransferase activity"/>
    <property type="evidence" value="ECO:0007669"/>
    <property type="project" value="UniProtKB-UniRule"/>
</dbReference>
<dbReference type="GO" id="GO:0030145">
    <property type="term" value="F:manganese ion binding"/>
    <property type="evidence" value="ECO:0007669"/>
    <property type="project" value="UniProtKB-UniRule"/>
</dbReference>
<dbReference type="GO" id="GO:0009098">
    <property type="term" value="P:L-leucine biosynthetic process"/>
    <property type="evidence" value="ECO:0007669"/>
    <property type="project" value="UniProtKB-UniRule"/>
</dbReference>
<dbReference type="CDD" id="cd07940">
    <property type="entry name" value="DRE_TIM_IPMS"/>
    <property type="match status" value="1"/>
</dbReference>
<dbReference type="FunFam" id="1.10.238.260:FF:000001">
    <property type="entry name" value="2-isopropylmalate synthase"/>
    <property type="match status" value="1"/>
</dbReference>
<dbReference type="FunFam" id="3.20.20.70:FF:000010">
    <property type="entry name" value="2-isopropylmalate synthase"/>
    <property type="match status" value="1"/>
</dbReference>
<dbReference type="FunFam" id="3.30.160.270:FF:000003">
    <property type="entry name" value="2-isopropylmalate synthase"/>
    <property type="match status" value="1"/>
</dbReference>
<dbReference type="Gene3D" id="1.10.238.260">
    <property type="match status" value="1"/>
</dbReference>
<dbReference type="Gene3D" id="3.30.160.270">
    <property type="match status" value="1"/>
</dbReference>
<dbReference type="Gene3D" id="3.20.20.70">
    <property type="entry name" value="Aldolase class I"/>
    <property type="match status" value="1"/>
</dbReference>
<dbReference type="HAMAP" id="MF_01025">
    <property type="entry name" value="LeuA_type1"/>
    <property type="match status" value="1"/>
</dbReference>
<dbReference type="InterPro" id="IPR050073">
    <property type="entry name" value="2-IPM_HCS-like"/>
</dbReference>
<dbReference type="InterPro" id="IPR013709">
    <property type="entry name" value="2-isopropylmalate_synth_dimer"/>
</dbReference>
<dbReference type="InterPro" id="IPR002034">
    <property type="entry name" value="AIPM/Hcit_synth_CS"/>
</dbReference>
<dbReference type="InterPro" id="IPR013785">
    <property type="entry name" value="Aldolase_TIM"/>
</dbReference>
<dbReference type="InterPro" id="IPR054691">
    <property type="entry name" value="LeuA/HCS_post-cat"/>
</dbReference>
<dbReference type="InterPro" id="IPR036230">
    <property type="entry name" value="LeuA_allosteric_dom_sf"/>
</dbReference>
<dbReference type="InterPro" id="IPR005671">
    <property type="entry name" value="LeuA_bact_synth"/>
</dbReference>
<dbReference type="InterPro" id="IPR000891">
    <property type="entry name" value="PYR_CT"/>
</dbReference>
<dbReference type="NCBIfam" id="TIGR00973">
    <property type="entry name" value="leuA_bact"/>
    <property type="match status" value="1"/>
</dbReference>
<dbReference type="NCBIfam" id="NF002086">
    <property type="entry name" value="PRK00915.1-3"/>
    <property type="match status" value="1"/>
</dbReference>
<dbReference type="NCBIfam" id="NF002087">
    <property type="entry name" value="PRK00915.1-4"/>
    <property type="match status" value="1"/>
</dbReference>
<dbReference type="PANTHER" id="PTHR10277:SF9">
    <property type="entry name" value="2-ISOPROPYLMALATE SYNTHASE 1, CHLOROPLASTIC-RELATED"/>
    <property type="match status" value="1"/>
</dbReference>
<dbReference type="PANTHER" id="PTHR10277">
    <property type="entry name" value="HOMOCITRATE SYNTHASE-RELATED"/>
    <property type="match status" value="1"/>
</dbReference>
<dbReference type="Pfam" id="PF22617">
    <property type="entry name" value="HCS_D2"/>
    <property type="match status" value="1"/>
</dbReference>
<dbReference type="Pfam" id="PF00682">
    <property type="entry name" value="HMGL-like"/>
    <property type="match status" value="1"/>
</dbReference>
<dbReference type="Pfam" id="PF08502">
    <property type="entry name" value="LeuA_dimer"/>
    <property type="match status" value="1"/>
</dbReference>
<dbReference type="SMART" id="SM00917">
    <property type="entry name" value="LeuA_dimer"/>
    <property type="match status" value="1"/>
</dbReference>
<dbReference type="SUPFAM" id="SSF110921">
    <property type="entry name" value="2-isopropylmalate synthase LeuA, allosteric (dimerisation) domain"/>
    <property type="match status" value="1"/>
</dbReference>
<dbReference type="SUPFAM" id="SSF51569">
    <property type="entry name" value="Aldolase"/>
    <property type="match status" value="1"/>
</dbReference>
<dbReference type="PROSITE" id="PS00815">
    <property type="entry name" value="AIPM_HOMOCIT_SYNTH_1"/>
    <property type="match status" value="1"/>
</dbReference>
<dbReference type="PROSITE" id="PS00816">
    <property type="entry name" value="AIPM_HOMOCIT_SYNTH_2"/>
    <property type="match status" value="1"/>
</dbReference>
<dbReference type="PROSITE" id="PS50991">
    <property type="entry name" value="PYR_CT"/>
    <property type="match status" value="1"/>
</dbReference>
<evidence type="ECO:0000255" key="1">
    <source>
        <dbReference type="HAMAP-Rule" id="MF_01025"/>
    </source>
</evidence>
<feature type="chain" id="PRO_1000149145" description="2-isopropylmalate synthase">
    <location>
        <begin position="1"/>
        <end position="514"/>
    </location>
</feature>
<feature type="domain" description="Pyruvate carboxyltransferase" evidence="1">
    <location>
        <begin position="5"/>
        <end position="268"/>
    </location>
</feature>
<feature type="region of interest" description="Regulatory domain" evidence="1">
    <location>
        <begin position="395"/>
        <end position="514"/>
    </location>
</feature>
<feature type="binding site" evidence="1">
    <location>
        <position position="14"/>
    </location>
    <ligand>
        <name>Mn(2+)</name>
        <dbReference type="ChEBI" id="CHEBI:29035"/>
    </ligand>
</feature>
<feature type="binding site" evidence="1">
    <location>
        <position position="202"/>
    </location>
    <ligand>
        <name>Mn(2+)</name>
        <dbReference type="ChEBI" id="CHEBI:29035"/>
    </ligand>
</feature>
<feature type="binding site" evidence="1">
    <location>
        <position position="204"/>
    </location>
    <ligand>
        <name>Mn(2+)</name>
        <dbReference type="ChEBI" id="CHEBI:29035"/>
    </ligand>
</feature>
<feature type="binding site" evidence="1">
    <location>
        <position position="239"/>
    </location>
    <ligand>
        <name>Mn(2+)</name>
        <dbReference type="ChEBI" id="CHEBI:29035"/>
    </ligand>
</feature>
<name>LEU1_BURO1</name>
<sequence length="514" mass="55507">MTDKLIIFDTTLRDGEQSPGASMTKEEKIRIAKHLERMKVDVIEAGFAASSNGDFDAIHTIAGLVKDSTICSLARANDKDIQRAADALKPANSARIHTFIATSPLHMEKKLRMTPDQVFEQARLAVRFARKFTDNVEFSPEDGSRSDLDFLCRVLEAVIAEGATTINIADTVGYGVPELYGNLVKTLRERIPNSDKAIFSVHCHNDLGMAVANSLAGVKIGGARQIECTINGLGERAGNTSLEEIVMAVKTRKDYFGLDVGIDTTQIVPTSKLVSQITGFVVQPNKAVVGANAFAHASGIHQDGVLKARDTYEIMRAEDVGWTANKIVLGKLSGRNAFKQRLQELGVSLDSEAELNAAFMRFKDLADRKAEIFDEDIIAIVSEESALAQEQEHFKFVSLSQRSETGEQPQAKVVFAVEGKEVTGEARGNGPVDATFNAIEGEVGSGSELLLYSVNAITTGTQAQGEVTVRLSKSGRIVNGVGTDPDIVAASAKAYISALNKLHSKDDKLNPQRA</sequence>
<keyword id="KW-0028">Amino-acid biosynthesis</keyword>
<keyword id="KW-0100">Branched-chain amino acid biosynthesis</keyword>
<keyword id="KW-0963">Cytoplasm</keyword>
<keyword id="KW-0432">Leucine biosynthesis</keyword>
<keyword id="KW-0464">Manganese</keyword>
<keyword id="KW-0479">Metal-binding</keyword>
<keyword id="KW-0808">Transferase</keyword>
<protein>
    <recommendedName>
        <fullName evidence="1">2-isopropylmalate synthase</fullName>
        <ecNumber evidence="1">2.3.3.13</ecNumber>
    </recommendedName>
    <alternativeName>
        <fullName evidence="1">Alpha-IPM synthase</fullName>
    </alternativeName>
    <alternativeName>
        <fullName evidence="1">Alpha-isopropylmalate synthase</fullName>
    </alternativeName>
</protein>
<accession>Q1BV03</accession>
<organism>
    <name type="scientific">Burkholderia orbicola (strain AU 1054)</name>
    <dbReference type="NCBI Taxonomy" id="331271"/>
    <lineage>
        <taxon>Bacteria</taxon>
        <taxon>Pseudomonadati</taxon>
        <taxon>Pseudomonadota</taxon>
        <taxon>Betaproteobacteria</taxon>
        <taxon>Burkholderiales</taxon>
        <taxon>Burkholderiaceae</taxon>
        <taxon>Burkholderia</taxon>
        <taxon>Burkholderia cepacia complex</taxon>
        <taxon>Burkholderia orbicola</taxon>
    </lineage>
</organism>